<feature type="chain" id="PRO_1000059599" description="Chaperone protein DnaK">
    <location>
        <begin position="1"/>
        <end position="636"/>
    </location>
</feature>
<feature type="region of interest" description="Disordered" evidence="2">
    <location>
        <begin position="603"/>
        <end position="636"/>
    </location>
</feature>
<feature type="compositionally biased region" description="Acidic residues" evidence="2">
    <location>
        <begin position="621"/>
        <end position="630"/>
    </location>
</feature>
<feature type="modified residue" description="Phosphothreonine; by autocatalysis" evidence="1">
    <location>
        <position position="198"/>
    </location>
</feature>
<reference key="1">
    <citation type="submission" date="2006-06" db="EMBL/GenBank/DDBJ databases">
        <title>Complete sequence of chromosome of Mesorhizobium sp. BNC1.</title>
        <authorList>
            <consortium name="US DOE Joint Genome Institute"/>
            <person name="Copeland A."/>
            <person name="Lucas S."/>
            <person name="Lapidus A."/>
            <person name="Barry K."/>
            <person name="Detter J.C."/>
            <person name="Glavina del Rio T."/>
            <person name="Hammon N."/>
            <person name="Israni S."/>
            <person name="Dalin E."/>
            <person name="Tice H."/>
            <person name="Pitluck S."/>
            <person name="Chertkov O."/>
            <person name="Brettin T."/>
            <person name="Bruce D."/>
            <person name="Han C."/>
            <person name="Tapia R."/>
            <person name="Gilna P."/>
            <person name="Schmutz J."/>
            <person name="Larimer F."/>
            <person name="Land M."/>
            <person name="Hauser L."/>
            <person name="Kyrpides N."/>
            <person name="Mikhailova N."/>
            <person name="Richardson P."/>
        </authorList>
    </citation>
    <scope>NUCLEOTIDE SEQUENCE [LARGE SCALE GENOMIC DNA]</scope>
    <source>
        <strain>BNC1</strain>
    </source>
</reference>
<sequence length="636" mass="68648">MAKVIGIDLGTTNSCVAVMDGKDAKVIENAEGARTTPSIVAFTDSDERLVGQPAKRQAVTNPENTFFAIKRLIGRRFEDPMVEKDKKLVPYKIVKADNGDAWVESHGTKYSPSQISAMILQKMKETAESYLGEKVEKAVITVPAYFNDAQRQATKDAGKIAGLEVLRIINEPTAAALAYGLDKKEGKTIAVYDLGGGTFDISILEIGDGVFEVKSTNGDTFLGGEDFDMRLVNYLADEFKKEQGIDLKNDKLALQRLKEAAEKAKIELSSSSQTEINLPFITADQTGPKHLAIKLTRAKFESLVEDLVTRTIEPCRAALKDAGLSAGEIDEVVLVGGMTRMPKVQETVKNFFGKEPHKGVNPDEVVAMGAAIQAGVLQGDVKDVLLLDVTPLSLGIETLGGVFTRLIDRNTTIPTKKSQVFSTAEDNQNAVTIRVFQGEREMAADNKLLGQFDLVGIPPAPRGMPQIEVTFDIDANGIVNVSAKDKGTGKEQQIRIQASGGLSDAEIEKMVKDAEANAEADKKRRETVEVKNQAEALIHSTEKSLKDYGDKVSEDDRKAIENAIAELKTATEGEDADAIRAKTTALAEASMKLGQAVYEASQAENAAGGTEETGGAKDDVVDADFEEIDEDDKKSA</sequence>
<gene>
    <name evidence="1" type="primary">dnaK</name>
    <name type="ordered locus">Meso_0679</name>
</gene>
<evidence type="ECO:0000255" key="1">
    <source>
        <dbReference type="HAMAP-Rule" id="MF_00332"/>
    </source>
</evidence>
<evidence type="ECO:0000256" key="2">
    <source>
        <dbReference type="SAM" id="MobiDB-lite"/>
    </source>
</evidence>
<comment type="function">
    <text evidence="1">Acts as a chaperone.</text>
</comment>
<comment type="induction">
    <text evidence="1">By stress conditions e.g. heat shock.</text>
</comment>
<comment type="similarity">
    <text evidence="1">Belongs to the heat shock protein 70 family.</text>
</comment>
<organism>
    <name type="scientific">Chelativorans sp. (strain BNC1)</name>
    <dbReference type="NCBI Taxonomy" id="266779"/>
    <lineage>
        <taxon>Bacteria</taxon>
        <taxon>Pseudomonadati</taxon>
        <taxon>Pseudomonadota</taxon>
        <taxon>Alphaproteobacteria</taxon>
        <taxon>Hyphomicrobiales</taxon>
        <taxon>Phyllobacteriaceae</taxon>
        <taxon>Chelativorans</taxon>
    </lineage>
</organism>
<proteinExistence type="inferred from homology"/>
<protein>
    <recommendedName>
        <fullName evidence="1">Chaperone protein DnaK</fullName>
    </recommendedName>
    <alternativeName>
        <fullName evidence="1">HSP70</fullName>
    </alternativeName>
    <alternativeName>
        <fullName evidence="1">Heat shock 70 kDa protein</fullName>
    </alternativeName>
    <alternativeName>
        <fullName evidence="1">Heat shock protein 70</fullName>
    </alternativeName>
</protein>
<name>DNAK_CHESB</name>
<accession>Q11KJ6</accession>
<dbReference type="EMBL" id="CP000390">
    <property type="protein sequence ID" value="ABG62079.1"/>
    <property type="molecule type" value="Genomic_DNA"/>
</dbReference>
<dbReference type="SMR" id="Q11KJ6"/>
<dbReference type="STRING" id="266779.Meso_0679"/>
<dbReference type="KEGG" id="mes:Meso_0679"/>
<dbReference type="eggNOG" id="COG0443">
    <property type="taxonomic scope" value="Bacteria"/>
</dbReference>
<dbReference type="HOGENOM" id="CLU_005965_2_1_5"/>
<dbReference type="OrthoDB" id="9766019at2"/>
<dbReference type="GO" id="GO:0005524">
    <property type="term" value="F:ATP binding"/>
    <property type="evidence" value="ECO:0007669"/>
    <property type="project" value="UniProtKB-UniRule"/>
</dbReference>
<dbReference type="GO" id="GO:0140662">
    <property type="term" value="F:ATP-dependent protein folding chaperone"/>
    <property type="evidence" value="ECO:0007669"/>
    <property type="project" value="InterPro"/>
</dbReference>
<dbReference type="GO" id="GO:0051082">
    <property type="term" value="F:unfolded protein binding"/>
    <property type="evidence" value="ECO:0007669"/>
    <property type="project" value="InterPro"/>
</dbReference>
<dbReference type="CDD" id="cd11733">
    <property type="entry name" value="ASKHA_NBD_HSP70_HSPA9"/>
    <property type="match status" value="1"/>
</dbReference>
<dbReference type="FunFam" id="2.60.34.10:FF:000014">
    <property type="entry name" value="Chaperone protein DnaK HSP70"/>
    <property type="match status" value="1"/>
</dbReference>
<dbReference type="FunFam" id="3.30.420.40:FF:000020">
    <property type="entry name" value="Chaperone protein HscA homolog"/>
    <property type="match status" value="1"/>
</dbReference>
<dbReference type="FunFam" id="1.20.1270.10:FF:000001">
    <property type="entry name" value="Molecular chaperone DnaK"/>
    <property type="match status" value="1"/>
</dbReference>
<dbReference type="FunFam" id="3.30.420.40:FF:000004">
    <property type="entry name" value="Molecular chaperone DnaK"/>
    <property type="match status" value="1"/>
</dbReference>
<dbReference type="FunFam" id="3.90.640.10:FF:000003">
    <property type="entry name" value="Molecular chaperone DnaK"/>
    <property type="match status" value="1"/>
</dbReference>
<dbReference type="Gene3D" id="1.20.1270.10">
    <property type="match status" value="1"/>
</dbReference>
<dbReference type="Gene3D" id="3.30.420.40">
    <property type="match status" value="2"/>
</dbReference>
<dbReference type="Gene3D" id="3.90.640.10">
    <property type="entry name" value="Actin, Chain A, domain 4"/>
    <property type="match status" value="1"/>
</dbReference>
<dbReference type="Gene3D" id="2.60.34.10">
    <property type="entry name" value="Substrate Binding Domain Of DNAk, Chain A, domain 1"/>
    <property type="match status" value="1"/>
</dbReference>
<dbReference type="HAMAP" id="MF_00332">
    <property type="entry name" value="DnaK"/>
    <property type="match status" value="1"/>
</dbReference>
<dbReference type="InterPro" id="IPR043129">
    <property type="entry name" value="ATPase_NBD"/>
</dbReference>
<dbReference type="InterPro" id="IPR012725">
    <property type="entry name" value="Chaperone_DnaK"/>
</dbReference>
<dbReference type="InterPro" id="IPR018181">
    <property type="entry name" value="Heat_shock_70_CS"/>
</dbReference>
<dbReference type="InterPro" id="IPR029048">
    <property type="entry name" value="HSP70_C_sf"/>
</dbReference>
<dbReference type="InterPro" id="IPR029047">
    <property type="entry name" value="HSP70_peptide-bd_sf"/>
</dbReference>
<dbReference type="InterPro" id="IPR013126">
    <property type="entry name" value="Hsp_70_fam"/>
</dbReference>
<dbReference type="NCBIfam" id="NF001413">
    <property type="entry name" value="PRK00290.1"/>
    <property type="match status" value="1"/>
</dbReference>
<dbReference type="NCBIfam" id="NF003520">
    <property type="entry name" value="PRK05183.1"/>
    <property type="match status" value="1"/>
</dbReference>
<dbReference type="NCBIfam" id="TIGR02350">
    <property type="entry name" value="prok_dnaK"/>
    <property type="match status" value="1"/>
</dbReference>
<dbReference type="PANTHER" id="PTHR19375">
    <property type="entry name" value="HEAT SHOCK PROTEIN 70KDA"/>
    <property type="match status" value="1"/>
</dbReference>
<dbReference type="Pfam" id="PF00012">
    <property type="entry name" value="HSP70"/>
    <property type="match status" value="1"/>
</dbReference>
<dbReference type="PRINTS" id="PR00301">
    <property type="entry name" value="HEATSHOCK70"/>
</dbReference>
<dbReference type="SUPFAM" id="SSF53067">
    <property type="entry name" value="Actin-like ATPase domain"/>
    <property type="match status" value="2"/>
</dbReference>
<dbReference type="SUPFAM" id="SSF100934">
    <property type="entry name" value="Heat shock protein 70kD (HSP70), C-terminal subdomain"/>
    <property type="match status" value="1"/>
</dbReference>
<dbReference type="SUPFAM" id="SSF100920">
    <property type="entry name" value="Heat shock protein 70kD (HSP70), peptide-binding domain"/>
    <property type="match status" value="1"/>
</dbReference>
<dbReference type="PROSITE" id="PS00297">
    <property type="entry name" value="HSP70_1"/>
    <property type="match status" value="1"/>
</dbReference>
<dbReference type="PROSITE" id="PS00329">
    <property type="entry name" value="HSP70_2"/>
    <property type="match status" value="1"/>
</dbReference>
<dbReference type="PROSITE" id="PS01036">
    <property type="entry name" value="HSP70_3"/>
    <property type="match status" value="1"/>
</dbReference>
<keyword id="KW-0067">ATP-binding</keyword>
<keyword id="KW-0143">Chaperone</keyword>
<keyword id="KW-0547">Nucleotide-binding</keyword>
<keyword id="KW-0597">Phosphoprotein</keyword>
<keyword id="KW-0346">Stress response</keyword>